<protein>
    <recommendedName>
        <fullName evidence="1">GTPase Der</fullName>
    </recommendedName>
    <alternativeName>
        <fullName evidence="1">GTP-binding protein EngA</fullName>
    </alternativeName>
</protein>
<proteinExistence type="inferred from homology"/>
<feature type="chain" id="PRO_1000099097" description="GTPase Der">
    <location>
        <begin position="1"/>
        <end position="445"/>
    </location>
</feature>
<feature type="domain" description="EngA-type G 1">
    <location>
        <begin position="3"/>
        <end position="167"/>
    </location>
</feature>
<feature type="domain" description="EngA-type G 2">
    <location>
        <begin position="180"/>
        <end position="353"/>
    </location>
</feature>
<feature type="domain" description="KH-like" evidence="1">
    <location>
        <begin position="354"/>
        <end position="438"/>
    </location>
</feature>
<feature type="binding site" evidence="1">
    <location>
        <begin position="9"/>
        <end position="16"/>
    </location>
    <ligand>
        <name>GTP</name>
        <dbReference type="ChEBI" id="CHEBI:37565"/>
        <label>1</label>
    </ligand>
</feature>
<feature type="binding site" evidence="1">
    <location>
        <begin position="56"/>
        <end position="60"/>
    </location>
    <ligand>
        <name>GTP</name>
        <dbReference type="ChEBI" id="CHEBI:37565"/>
        <label>1</label>
    </ligand>
</feature>
<feature type="binding site" evidence="1">
    <location>
        <begin position="119"/>
        <end position="122"/>
    </location>
    <ligand>
        <name>GTP</name>
        <dbReference type="ChEBI" id="CHEBI:37565"/>
        <label>1</label>
    </ligand>
</feature>
<feature type="binding site" evidence="1">
    <location>
        <begin position="186"/>
        <end position="193"/>
    </location>
    <ligand>
        <name>GTP</name>
        <dbReference type="ChEBI" id="CHEBI:37565"/>
        <label>2</label>
    </ligand>
</feature>
<feature type="binding site" evidence="1">
    <location>
        <begin position="233"/>
        <end position="237"/>
    </location>
    <ligand>
        <name>GTP</name>
        <dbReference type="ChEBI" id="CHEBI:37565"/>
        <label>2</label>
    </ligand>
</feature>
<feature type="binding site" evidence="1">
    <location>
        <begin position="298"/>
        <end position="301"/>
    </location>
    <ligand>
        <name>GTP</name>
        <dbReference type="ChEBI" id="CHEBI:37565"/>
        <label>2</label>
    </ligand>
</feature>
<accession>A9AH00</accession>
<organism>
    <name type="scientific">Burkholderia multivorans (strain ATCC 17616 / 249)</name>
    <dbReference type="NCBI Taxonomy" id="395019"/>
    <lineage>
        <taxon>Bacteria</taxon>
        <taxon>Pseudomonadati</taxon>
        <taxon>Pseudomonadota</taxon>
        <taxon>Betaproteobacteria</taxon>
        <taxon>Burkholderiales</taxon>
        <taxon>Burkholderiaceae</taxon>
        <taxon>Burkholderia</taxon>
        <taxon>Burkholderia cepacia complex</taxon>
    </lineage>
</organism>
<evidence type="ECO:0000255" key="1">
    <source>
        <dbReference type="HAMAP-Rule" id="MF_00195"/>
    </source>
</evidence>
<sequence length="445" mass="48971">MKPVIALVGRPNVGKSTLFNRLTRSRDALVADLPGLTRDRHYGEGRVGARPYLVVDTGGFEPVAKDGILHEMARQTRQAVEEADVVVFIVDGRNGLAPQDKSIADYLRKTGRPIFLVVNKAEGMKYTAVATDFYELGLGDPRAISAAHGDGVTDMINEALEVAYADQPEEEDDNDPSRGIKIAIVGRPNVGKSTLVNALIGEDRVIAFDMPGTTRDSIYVDFERNGKKYTLIDTAGLRRSGKVFEAIEKFSVVKTLQSISDANVVILLLDAQQDISDQDAHIAGFVVEQGRALVIGVNKWDGLDEHARERAKADLTRKLKFLDFAKSHFISAAKKTGIGALMRSVDDAYAAAMAKLPTPKLTRALIEAVEFQQPRRRGPVRPKLRYAHQGGQNPPIIVIHGNALDAVTETYKRYLENRFRETFSLTGTPLRIEFRSSTNPYADKG</sequence>
<keyword id="KW-0342">GTP-binding</keyword>
<keyword id="KW-0547">Nucleotide-binding</keyword>
<keyword id="KW-1185">Reference proteome</keyword>
<keyword id="KW-0677">Repeat</keyword>
<keyword id="KW-0690">Ribosome biogenesis</keyword>
<gene>
    <name evidence="1" type="primary">der</name>
    <name type="synonym">engA</name>
    <name type="ordered locus">Bmul_1467</name>
    <name type="ordered locus">BMULJ_01776</name>
</gene>
<name>DER_BURM1</name>
<dbReference type="EMBL" id="CP000868">
    <property type="protein sequence ID" value="ABX15155.1"/>
    <property type="molecule type" value="Genomic_DNA"/>
</dbReference>
<dbReference type="EMBL" id="AP009385">
    <property type="protein sequence ID" value="BAG43696.1"/>
    <property type="molecule type" value="Genomic_DNA"/>
</dbReference>
<dbReference type="RefSeq" id="WP_012213258.1">
    <property type="nucleotide sequence ID" value="NC_010084.1"/>
</dbReference>
<dbReference type="SMR" id="A9AH00"/>
<dbReference type="STRING" id="395019.BMULJ_01776"/>
<dbReference type="KEGG" id="bmj:BMULJ_01776"/>
<dbReference type="KEGG" id="bmu:Bmul_1467"/>
<dbReference type="eggNOG" id="COG1160">
    <property type="taxonomic scope" value="Bacteria"/>
</dbReference>
<dbReference type="HOGENOM" id="CLU_016077_6_2_4"/>
<dbReference type="Proteomes" id="UP000008815">
    <property type="component" value="Chromosome 1"/>
</dbReference>
<dbReference type="GO" id="GO:0016887">
    <property type="term" value="F:ATP hydrolysis activity"/>
    <property type="evidence" value="ECO:0007669"/>
    <property type="project" value="InterPro"/>
</dbReference>
<dbReference type="GO" id="GO:0005525">
    <property type="term" value="F:GTP binding"/>
    <property type="evidence" value="ECO:0007669"/>
    <property type="project" value="UniProtKB-UniRule"/>
</dbReference>
<dbReference type="GO" id="GO:0043022">
    <property type="term" value="F:ribosome binding"/>
    <property type="evidence" value="ECO:0007669"/>
    <property type="project" value="TreeGrafter"/>
</dbReference>
<dbReference type="GO" id="GO:0042254">
    <property type="term" value="P:ribosome biogenesis"/>
    <property type="evidence" value="ECO:0007669"/>
    <property type="project" value="UniProtKB-KW"/>
</dbReference>
<dbReference type="CDD" id="cd01894">
    <property type="entry name" value="EngA1"/>
    <property type="match status" value="1"/>
</dbReference>
<dbReference type="CDD" id="cd01895">
    <property type="entry name" value="EngA2"/>
    <property type="match status" value="1"/>
</dbReference>
<dbReference type="FunFam" id="3.30.300.20:FF:000004">
    <property type="entry name" value="GTPase Der"/>
    <property type="match status" value="1"/>
</dbReference>
<dbReference type="FunFam" id="3.40.50.300:FF:000040">
    <property type="entry name" value="GTPase Der"/>
    <property type="match status" value="1"/>
</dbReference>
<dbReference type="FunFam" id="3.40.50.300:FF:000057">
    <property type="entry name" value="GTPase Der"/>
    <property type="match status" value="1"/>
</dbReference>
<dbReference type="Gene3D" id="3.30.300.20">
    <property type="match status" value="1"/>
</dbReference>
<dbReference type="Gene3D" id="3.40.50.300">
    <property type="entry name" value="P-loop containing nucleotide triphosphate hydrolases"/>
    <property type="match status" value="2"/>
</dbReference>
<dbReference type="HAMAP" id="MF_00195">
    <property type="entry name" value="GTPase_Der"/>
    <property type="match status" value="1"/>
</dbReference>
<dbReference type="InterPro" id="IPR003593">
    <property type="entry name" value="AAA+_ATPase"/>
</dbReference>
<dbReference type="InterPro" id="IPR031166">
    <property type="entry name" value="G_ENGA"/>
</dbReference>
<dbReference type="InterPro" id="IPR006073">
    <property type="entry name" value="GTP-bd"/>
</dbReference>
<dbReference type="InterPro" id="IPR016484">
    <property type="entry name" value="GTPase_Der"/>
</dbReference>
<dbReference type="InterPro" id="IPR032859">
    <property type="entry name" value="KH_dom-like"/>
</dbReference>
<dbReference type="InterPro" id="IPR015946">
    <property type="entry name" value="KH_dom-like_a/b"/>
</dbReference>
<dbReference type="InterPro" id="IPR027417">
    <property type="entry name" value="P-loop_NTPase"/>
</dbReference>
<dbReference type="InterPro" id="IPR005225">
    <property type="entry name" value="Small_GTP-bd"/>
</dbReference>
<dbReference type="NCBIfam" id="TIGR03594">
    <property type="entry name" value="GTPase_EngA"/>
    <property type="match status" value="1"/>
</dbReference>
<dbReference type="NCBIfam" id="TIGR00231">
    <property type="entry name" value="small_GTP"/>
    <property type="match status" value="2"/>
</dbReference>
<dbReference type="PANTHER" id="PTHR43834">
    <property type="entry name" value="GTPASE DER"/>
    <property type="match status" value="1"/>
</dbReference>
<dbReference type="PANTHER" id="PTHR43834:SF6">
    <property type="entry name" value="GTPASE DER"/>
    <property type="match status" value="1"/>
</dbReference>
<dbReference type="Pfam" id="PF14714">
    <property type="entry name" value="KH_dom-like"/>
    <property type="match status" value="1"/>
</dbReference>
<dbReference type="Pfam" id="PF01926">
    <property type="entry name" value="MMR_HSR1"/>
    <property type="match status" value="2"/>
</dbReference>
<dbReference type="PIRSF" id="PIRSF006485">
    <property type="entry name" value="GTP-binding_EngA"/>
    <property type="match status" value="1"/>
</dbReference>
<dbReference type="PRINTS" id="PR00326">
    <property type="entry name" value="GTP1OBG"/>
</dbReference>
<dbReference type="SMART" id="SM00382">
    <property type="entry name" value="AAA"/>
    <property type="match status" value="2"/>
</dbReference>
<dbReference type="SUPFAM" id="SSF52540">
    <property type="entry name" value="P-loop containing nucleoside triphosphate hydrolases"/>
    <property type="match status" value="2"/>
</dbReference>
<dbReference type="PROSITE" id="PS51712">
    <property type="entry name" value="G_ENGA"/>
    <property type="match status" value="2"/>
</dbReference>
<reference key="1">
    <citation type="submission" date="2007-10" db="EMBL/GenBank/DDBJ databases">
        <title>Complete sequence of chromosome 1 of Burkholderia multivorans ATCC 17616.</title>
        <authorList>
            <person name="Copeland A."/>
            <person name="Lucas S."/>
            <person name="Lapidus A."/>
            <person name="Barry K."/>
            <person name="Glavina del Rio T."/>
            <person name="Dalin E."/>
            <person name="Tice H."/>
            <person name="Pitluck S."/>
            <person name="Chain P."/>
            <person name="Malfatti S."/>
            <person name="Shin M."/>
            <person name="Vergez L."/>
            <person name="Schmutz J."/>
            <person name="Larimer F."/>
            <person name="Land M."/>
            <person name="Hauser L."/>
            <person name="Kyrpides N."/>
            <person name="Kim E."/>
            <person name="Tiedje J."/>
            <person name="Richardson P."/>
        </authorList>
    </citation>
    <scope>NUCLEOTIDE SEQUENCE [LARGE SCALE GENOMIC DNA]</scope>
    <source>
        <strain>ATCC 17616 / 249</strain>
    </source>
</reference>
<reference key="2">
    <citation type="submission" date="2007-04" db="EMBL/GenBank/DDBJ databases">
        <title>Complete genome sequence of Burkholderia multivorans ATCC 17616.</title>
        <authorList>
            <person name="Ohtsubo Y."/>
            <person name="Yamashita A."/>
            <person name="Kurokawa K."/>
            <person name="Takami H."/>
            <person name="Yuhara S."/>
            <person name="Nishiyama E."/>
            <person name="Endo R."/>
            <person name="Miyazaki R."/>
            <person name="Ono A."/>
            <person name="Yano K."/>
            <person name="Ito M."/>
            <person name="Sota M."/>
            <person name="Yuji N."/>
            <person name="Hattori M."/>
            <person name="Tsuda M."/>
        </authorList>
    </citation>
    <scope>NUCLEOTIDE SEQUENCE [LARGE SCALE GENOMIC DNA]</scope>
    <source>
        <strain>ATCC 17616 / 249</strain>
    </source>
</reference>
<comment type="function">
    <text evidence="1">GTPase that plays an essential role in the late steps of ribosome biogenesis.</text>
</comment>
<comment type="subunit">
    <text evidence="1">Associates with the 50S ribosomal subunit.</text>
</comment>
<comment type="similarity">
    <text evidence="1">Belongs to the TRAFAC class TrmE-Era-EngA-EngB-Septin-like GTPase superfamily. EngA (Der) GTPase family.</text>
</comment>